<proteinExistence type="inferred from homology"/>
<evidence type="ECO:0000255" key="1">
    <source>
        <dbReference type="HAMAP-Rule" id="MF_01844"/>
    </source>
</evidence>
<feature type="chain" id="PRO_0000334434" description="Na(+)/H(+) antiporter NhaA">
    <location>
        <begin position="1"/>
        <end position="389"/>
    </location>
</feature>
<feature type="transmembrane region" description="Helical" evidence="1">
    <location>
        <begin position="14"/>
        <end position="34"/>
    </location>
</feature>
<feature type="transmembrane region" description="Helical" evidence="1">
    <location>
        <begin position="59"/>
        <end position="79"/>
    </location>
</feature>
<feature type="transmembrane region" description="Helical" evidence="1">
    <location>
        <begin position="95"/>
        <end position="115"/>
    </location>
</feature>
<feature type="transmembrane region" description="Helical" evidence="1">
    <location>
        <begin position="124"/>
        <end position="144"/>
    </location>
</feature>
<feature type="transmembrane region" description="Helical" evidence="1">
    <location>
        <begin position="154"/>
        <end position="174"/>
    </location>
</feature>
<feature type="transmembrane region" description="Helical" evidence="1">
    <location>
        <begin position="177"/>
        <end position="197"/>
    </location>
</feature>
<feature type="transmembrane region" description="Helical" evidence="1">
    <location>
        <begin position="213"/>
        <end position="233"/>
    </location>
</feature>
<feature type="transmembrane region" description="Helical" evidence="1">
    <location>
        <begin position="261"/>
        <end position="281"/>
    </location>
</feature>
<feature type="transmembrane region" description="Helical" evidence="1">
    <location>
        <begin position="290"/>
        <end position="310"/>
    </location>
</feature>
<feature type="transmembrane region" description="Helical" evidence="1">
    <location>
        <begin position="328"/>
        <end position="348"/>
    </location>
</feature>
<feature type="transmembrane region" description="Helical" evidence="1">
    <location>
        <begin position="363"/>
        <end position="383"/>
    </location>
</feature>
<name>NHAA_SHESW</name>
<sequence>MEKAIRNFLSQESAGGILLLVAVVFAMLMANSPLSGLYQGFLGTDVQVRVGALDIHKPLLLWINDGLMALFFLLIGLEVKRELLEGALSSVAQASLPSFAAIGGMLVPAGIYLLFNYGDPVTQAGWAIPAATDIAFALGIMALLGNRVPVALKVFLLALAIIDDLGVIVIIALFYSSDLSTISLAIASVAILGLVGLNRKGITALTPYGILGLILWVAVLKSGVHATLAGVIIAFCIPLRAKDGSSPSEHLEHSLHPWSNFLILPVFAFANAGVALGNMSLDTLLSPVPIGIALGLILGKPIGVMLFSFIAVKLKLARLPDNVGWMQIAPVAAMCGIGFTMSMFIASLAFEQADPMYGDLARLGTLIGSFIAALVGYFWLSKVLPKKGV</sequence>
<dbReference type="EMBL" id="CP000503">
    <property type="protein sequence ID" value="ABM25834.1"/>
    <property type="molecule type" value="Genomic_DNA"/>
</dbReference>
<dbReference type="RefSeq" id="WP_011790286.1">
    <property type="nucleotide sequence ID" value="NC_008750.1"/>
</dbReference>
<dbReference type="SMR" id="A1RMD9"/>
<dbReference type="GeneID" id="67442664"/>
<dbReference type="KEGG" id="shw:Sputw3181_3017"/>
<dbReference type="HOGENOM" id="CLU_015803_1_0_6"/>
<dbReference type="Proteomes" id="UP000002597">
    <property type="component" value="Chromosome"/>
</dbReference>
<dbReference type="GO" id="GO:0005886">
    <property type="term" value="C:plasma membrane"/>
    <property type="evidence" value="ECO:0007669"/>
    <property type="project" value="UniProtKB-SubCell"/>
</dbReference>
<dbReference type="GO" id="GO:0015385">
    <property type="term" value="F:sodium:proton antiporter activity"/>
    <property type="evidence" value="ECO:0007669"/>
    <property type="project" value="TreeGrafter"/>
</dbReference>
<dbReference type="GO" id="GO:0006885">
    <property type="term" value="P:regulation of pH"/>
    <property type="evidence" value="ECO:0007669"/>
    <property type="project" value="InterPro"/>
</dbReference>
<dbReference type="Gene3D" id="1.20.1530.10">
    <property type="entry name" value="Na+/H+ antiporter like domain"/>
    <property type="match status" value="1"/>
</dbReference>
<dbReference type="HAMAP" id="MF_01844">
    <property type="entry name" value="NhaA"/>
    <property type="match status" value="1"/>
</dbReference>
<dbReference type="InterPro" id="IPR023171">
    <property type="entry name" value="Na/H_antiporter_dom_sf"/>
</dbReference>
<dbReference type="InterPro" id="IPR004670">
    <property type="entry name" value="NhaA"/>
</dbReference>
<dbReference type="NCBIfam" id="TIGR00773">
    <property type="entry name" value="NhaA"/>
    <property type="match status" value="1"/>
</dbReference>
<dbReference type="NCBIfam" id="NF007111">
    <property type="entry name" value="PRK09560.1"/>
    <property type="match status" value="1"/>
</dbReference>
<dbReference type="NCBIfam" id="NF007112">
    <property type="entry name" value="PRK09561.1"/>
    <property type="match status" value="1"/>
</dbReference>
<dbReference type="PANTHER" id="PTHR30341:SF0">
    <property type="entry name" value="NA(+)_H(+) ANTIPORTER NHAA"/>
    <property type="match status" value="1"/>
</dbReference>
<dbReference type="PANTHER" id="PTHR30341">
    <property type="entry name" value="SODIUM ION/PROTON ANTIPORTER NHAA-RELATED"/>
    <property type="match status" value="1"/>
</dbReference>
<dbReference type="Pfam" id="PF06965">
    <property type="entry name" value="Na_H_antiport_1"/>
    <property type="match status" value="1"/>
</dbReference>
<keyword id="KW-0050">Antiport</keyword>
<keyword id="KW-0997">Cell inner membrane</keyword>
<keyword id="KW-1003">Cell membrane</keyword>
<keyword id="KW-0406">Ion transport</keyword>
<keyword id="KW-0472">Membrane</keyword>
<keyword id="KW-0915">Sodium</keyword>
<keyword id="KW-0739">Sodium transport</keyword>
<keyword id="KW-0812">Transmembrane</keyword>
<keyword id="KW-1133">Transmembrane helix</keyword>
<keyword id="KW-0813">Transport</keyword>
<organism>
    <name type="scientific">Shewanella sp. (strain W3-18-1)</name>
    <dbReference type="NCBI Taxonomy" id="351745"/>
    <lineage>
        <taxon>Bacteria</taxon>
        <taxon>Pseudomonadati</taxon>
        <taxon>Pseudomonadota</taxon>
        <taxon>Gammaproteobacteria</taxon>
        <taxon>Alteromonadales</taxon>
        <taxon>Shewanellaceae</taxon>
        <taxon>Shewanella</taxon>
    </lineage>
</organism>
<protein>
    <recommendedName>
        <fullName evidence="1">Na(+)/H(+) antiporter NhaA</fullName>
    </recommendedName>
    <alternativeName>
        <fullName evidence="1">Sodium/proton antiporter NhaA</fullName>
    </alternativeName>
</protein>
<gene>
    <name evidence="1" type="primary">nhaA</name>
    <name type="ordered locus">Sputw3181_3017</name>
</gene>
<reference key="1">
    <citation type="submission" date="2006-12" db="EMBL/GenBank/DDBJ databases">
        <title>Complete sequence of Shewanella sp. W3-18-1.</title>
        <authorList>
            <consortium name="US DOE Joint Genome Institute"/>
            <person name="Copeland A."/>
            <person name="Lucas S."/>
            <person name="Lapidus A."/>
            <person name="Barry K."/>
            <person name="Detter J.C."/>
            <person name="Glavina del Rio T."/>
            <person name="Hammon N."/>
            <person name="Israni S."/>
            <person name="Dalin E."/>
            <person name="Tice H."/>
            <person name="Pitluck S."/>
            <person name="Chain P."/>
            <person name="Malfatti S."/>
            <person name="Shin M."/>
            <person name="Vergez L."/>
            <person name="Schmutz J."/>
            <person name="Larimer F."/>
            <person name="Land M."/>
            <person name="Hauser L."/>
            <person name="Kyrpides N."/>
            <person name="Lykidis A."/>
            <person name="Tiedje J."/>
            <person name="Richardson P."/>
        </authorList>
    </citation>
    <scope>NUCLEOTIDE SEQUENCE [LARGE SCALE GENOMIC DNA]</scope>
    <source>
        <strain>W3-18-1</strain>
    </source>
</reference>
<accession>A1RMD9</accession>
<comment type="function">
    <text evidence="1">Na(+)/H(+) antiporter that extrudes sodium in exchange for external protons.</text>
</comment>
<comment type="catalytic activity">
    <reaction evidence="1">
        <text>Na(+)(in) + 2 H(+)(out) = Na(+)(out) + 2 H(+)(in)</text>
        <dbReference type="Rhea" id="RHEA:29251"/>
        <dbReference type="ChEBI" id="CHEBI:15378"/>
        <dbReference type="ChEBI" id="CHEBI:29101"/>
    </reaction>
    <physiologicalReaction direction="left-to-right" evidence="1">
        <dbReference type="Rhea" id="RHEA:29252"/>
    </physiologicalReaction>
</comment>
<comment type="subcellular location">
    <subcellularLocation>
        <location evidence="1">Cell inner membrane</location>
        <topology evidence="1">Multi-pass membrane protein</topology>
    </subcellularLocation>
</comment>
<comment type="similarity">
    <text evidence="1">Belongs to the NhaA Na(+)/H(+) (TC 2.A.33) antiporter family.</text>
</comment>